<accession>P61098</accession>
<organism>
    <name type="scientific">Segestria florentina</name>
    <name type="common">Tube-web spider</name>
    <name type="synonym">Segestria gracilis</name>
    <dbReference type="NCBI Taxonomy" id="31925"/>
    <lineage>
        <taxon>Eukaryota</taxon>
        <taxon>Metazoa</taxon>
        <taxon>Ecdysozoa</taxon>
        <taxon>Arthropoda</taxon>
        <taxon>Chelicerata</taxon>
        <taxon>Arachnida</taxon>
        <taxon>Araneae</taxon>
        <taxon>Araneomorphae</taxon>
        <taxon>Haplogynae</taxon>
        <taxon>Dysderoidea</taxon>
        <taxon>Segestriidae</taxon>
        <taxon>Segestria</taxon>
    </lineage>
</organism>
<keyword id="KW-1015">Disulfide bond</keyword>
<keyword id="KW-0960">Knottin</keyword>
<keyword id="KW-0964">Secreted</keyword>
<keyword id="KW-0800">Toxin</keyword>
<sequence length="46" mass="5002">KECMVDGTVCYIHNHNDCCGSCLCLNGPIARPWKMMVGNCKCGPKA</sequence>
<feature type="chain" id="PRO_0000087619" description="Mu-segestritoxin-Sf1d" evidence="4">
    <location>
        <begin position="1"/>
        <end position="46"/>
    </location>
</feature>
<feature type="region of interest" description="Keys region for toxin activity" evidence="1">
    <location>
        <begin position="31"/>
        <end position="33"/>
    </location>
</feature>
<feature type="disulfide bond" evidence="1">
    <location>
        <begin position="3"/>
        <end position="19"/>
    </location>
</feature>
<feature type="disulfide bond" evidence="1">
    <location>
        <begin position="10"/>
        <end position="22"/>
    </location>
</feature>
<feature type="disulfide bond" evidence="1">
    <location>
        <begin position="18"/>
        <end position="42"/>
    </location>
</feature>
<feature type="disulfide bond" evidence="1">
    <location>
        <begin position="24"/>
        <end position="40"/>
    </location>
</feature>
<proteinExistence type="inferred from homology"/>
<protein>
    <recommendedName>
        <fullName evidence="3">Mu-segestritoxin-Sf1d</fullName>
        <shortName evidence="3">Mu-SGTX-Sf1d</shortName>
    </recommendedName>
    <alternativeName>
        <fullName evidence="2">Toxin SFI4</fullName>
    </alternativeName>
</protein>
<name>SFI4_SEGFL</name>
<evidence type="ECO:0000250" key="1">
    <source>
        <dbReference type="UniProtKB" id="P61095"/>
    </source>
</evidence>
<evidence type="ECO:0000303" key="2">
    <source>
    </source>
</evidence>
<evidence type="ECO:0000305" key="3"/>
<evidence type="ECO:0000305" key="4">
    <source>
    </source>
</evidence>
<dbReference type="SMR" id="P61098"/>
<dbReference type="ArachnoServer" id="AS000119">
    <property type="toxin name" value="mu-segestritoxin-Sf1d"/>
</dbReference>
<dbReference type="GO" id="GO:0005576">
    <property type="term" value="C:extracellular region"/>
    <property type="evidence" value="ECO:0007669"/>
    <property type="project" value="UniProtKB-SubCell"/>
</dbReference>
<dbReference type="GO" id="GO:0090729">
    <property type="term" value="F:toxin activity"/>
    <property type="evidence" value="ECO:0007669"/>
    <property type="project" value="UniProtKB-KW"/>
</dbReference>
<dbReference type="Gene3D" id="4.10.40.60">
    <property type="match status" value="1"/>
</dbReference>
<dbReference type="InterPro" id="IPR053718">
    <property type="entry name" value="Insecticidal_knottin-like_sf"/>
</dbReference>
<dbReference type="InterPro" id="IPR012633">
    <property type="entry name" value="Toxin_28"/>
</dbReference>
<dbReference type="Pfam" id="PF08115">
    <property type="entry name" value="Toxin_28"/>
    <property type="match status" value="1"/>
</dbReference>
<reference key="1">
    <citation type="journal article" date="2002" name="Toxicon">
        <title>Novel insecticidal toxins from the venom of the spider Segestria florentina.</title>
        <authorList>
            <person name="Lipkin A."/>
            <person name="Kozlov S."/>
            <person name="Nosyreva E."/>
            <person name="Blake A."/>
            <person name="Windass J.D."/>
            <person name="Grishin E."/>
        </authorList>
    </citation>
    <scope>NUCLEOTIDE SEQUENCE [MRNA]</scope>
    <source>
        <tissue>Venom gland</tissue>
    </source>
</reference>
<comment type="function">
    <text evidence="1">Insecticidal toxin. It inhibits insect voltage-gated sodium channels (Nav) by partially blocking the channel pore in DUM neurons from the American cockroach, not by acting as a gating modifier. The inhibition is only partially reversible after prolonged washout. In vivo, the toxin causes flaccid paralysis followed by death when injected into Heliothis virescens larvae. It also causes uncoordinated movements followed by full paralysis to sheep blowflies (Lucilia cuprina). When the toxin is fused to snowdrop lectin, it is orally active against larvae of the tomato moth (Laconobia oleracea), the rice brown planthopper (Nilaparvata lugens), and the peach-potato aphid (Myzus persicae).</text>
</comment>
<comment type="subcellular location">
    <subcellularLocation>
        <location evidence="1">Secreted</location>
    </subcellularLocation>
</comment>
<comment type="tissue specificity">
    <text evidence="4">Expressed by the venom gland.</text>
</comment>
<comment type="domain">
    <text evidence="1">The presence of a 'disulfide through disulfide knot' structurally defines this protein as a knottin.</text>
</comment>
<comment type="similarity">
    <text evidence="3">Belongs to the neurotoxin 16 (SFI) family.</text>
</comment>